<evidence type="ECO:0000255" key="1">
    <source>
        <dbReference type="HAMAP-Rule" id="MF_01629"/>
    </source>
</evidence>
<name>PDXH_SHESR</name>
<keyword id="KW-0285">Flavoprotein</keyword>
<keyword id="KW-0288">FMN</keyword>
<keyword id="KW-0560">Oxidoreductase</keyword>
<keyword id="KW-0664">Pyridoxine biosynthesis</keyword>
<sequence>MTDLSDIRREYTKGGLRRADLPQNPMQLFELWMTQARDAELSDPTAMCVATVDEHGQPYQRIVLLKRFDDTGFVFFTNLGSRKAQQIAANNKVSLHFPWHSIERQVSILGEAQPLSTAEVLKYFMTRPKDSQIAAWVSQQSSKLSARQVLEGKFFEMKAKFAKGDVPLPSFWGGYLVKPSSIEFWQGGEHRLHDRFLYTRQADEWVIDRLAP</sequence>
<comment type="function">
    <text evidence="1">Catalyzes the oxidation of either pyridoxine 5'-phosphate (PNP) or pyridoxamine 5'-phosphate (PMP) into pyridoxal 5'-phosphate (PLP).</text>
</comment>
<comment type="catalytic activity">
    <reaction evidence="1">
        <text>pyridoxamine 5'-phosphate + O2 + H2O = pyridoxal 5'-phosphate + H2O2 + NH4(+)</text>
        <dbReference type="Rhea" id="RHEA:15817"/>
        <dbReference type="ChEBI" id="CHEBI:15377"/>
        <dbReference type="ChEBI" id="CHEBI:15379"/>
        <dbReference type="ChEBI" id="CHEBI:16240"/>
        <dbReference type="ChEBI" id="CHEBI:28938"/>
        <dbReference type="ChEBI" id="CHEBI:58451"/>
        <dbReference type="ChEBI" id="CHEBI:597326"/>
        <dbReference type="EC" id="1.4.3.5"/>
    </reaction>
</comment>
<comment type="catalytic activity">
    <reaction evidence="1">
        <text>pyridoxine 5'-phosphate + O2 = pyridoxal 5'-phosphate + H2O2</text>
        <dbReference type="Rhea" id="RHEA:15149"/>
        <dbReference type="ChEBI" id="CHEBI:15379"/>
        <dbReference type="ChEBI" id="CHEBI:16240"/>
        <dbReference type="ChEBI" id="CHEBI:58589"/>
        <dbReference type="ChEBI" id="CHEBI:597326"/>
        <dbReference type="EC" id="1.4.3.5"/>
    </reaction>
</comment>
<comment type="cofactor">
    <cofactor evidence="1">
        <name>FMN</name>
        <dbReference type="ChEBI" id="CHEBI:58210"/>
    </cofactor>
    <text evidence="1">Binds 1 FMN per subunit.</text>
</comment>
<comment type="pathway">
    <text evidence="1">Cofactor metabolism; pyridoxal 5'-phosphate salvage; pyridoxal 5'-phosphate from pyridoxamine 5'-phosphate: step 1/1.</text>
</comment>
<comment type="pathway">
    <text evidence="1">Cofactor metabolism; pyridoxal 5'-phosphate salvage; pyridoxal 5'-phosphate from pyridoxine 5'-phosphate: step 1/1.</text>
</comment>
<comment type="subunit">
    <text evidence="1">Homodimer.</text>
</comment>
<comment type="similarity">
    <text evidence="1">Belongs to the pyridoxamine 5'-phosphate oxidase family.</text>
</comment>
<organism>
    <name type="scientific">Shewanella sp. (strain MR-7)</name>
    <dbReference type="NCBI Taxonomy" id="60481"/>
    <lineage>
        <taxon>Bacteria</taxon>
        <taxon>Pseudomonadati</taxon>
        <taxon>Pseudomonadota</taxon>
        <taxon>Gammaproteobacteria</taxon>
        <taxon>Alteromonadales</taxon>
        <taxon>Shewanellaceae</taxon>
        <taxon>Shewanella</taxon>
    </lineage>
</organism>
<accession>Q0HW76</accession>
<dbReference type="EC" id="1.4.3.5" evidence="1"/>
<dbReference type="EMBL" id="CP000444">
    <property type="protein sequence ID" value="ABI42629.1"/>
    <property type="molecule type" value="Genomic_DNA"/>
</dbReference>
<dbReference type="SMR" id="Q0HW76"/>
<dbReference type="KEGG" id="shm:Shewmr7_1634"/>
<dbReference type="HOGENOM" id="CLU_032263_2_2_6"/>
<dbReference type="UniPathway" id="UPA01068">
    <property type="reaction ID" value="UER00304"/>
</dbReference>
<dbReference type="UniPathway" id="UPA01068">
    <property type="reaction ID" value="UER00305"/>
</dbReference>
<dbReference type="GO" id="GO:0010181">
    <property type="term" value="F:FMN binding"/>
    <property type="evidence" value="ECO:0007669"/>
    <property type="project" value="UniProtKB-UniRule"/>
</dbReference>
<dbReference type="GO" id="GO:0004733">
    <property type="term" value="F:pyridoxamine phosphate oxidase activity"/>
    <property type="evidence" value="ECO:0007669"/>
    <property type="project" value="UniProtKB-UniRule"/>
</dbReference>
<dbReference type="GO" id="GO:0008615">
    <property type="term" value="P:pyridoxine biosynthetic process"/>
    <property type="evidence" value="ECO:0007669"/>
    <property type="project" value="UniProtKB-KW"/>
</dbReference>
<dbReference type="FunFam" id="2.30.110.10:FF:000001">
    <property type="entry name" value="Pyridoxine/pyridoxamine 5'-phosphate oxidase"/>
    <property type="match status" value="1"/>
</dbReference>
<dbReference type="Gene3D" id="2.30.110.10">
    <property type="entry name" value="Electron Transport, Fmn-binding Protein, Chain A"/>
    <property type="match status" value="1"/>
</dbReference>
<dbReference type="HAMAP" id="MF_01629">
    <property type="entry name" value="PdxH"/>
    <property type="match status" value="1"/>
</dbReference>
<dbReference type="InterPro" id="IPR000659">
    <property type="entry name" value="Pyridox_Oxase"/>
</dbReference>
<dbReference type="InterPro" id="IPR019740">
    <property type="entry name" value="Pyridox_Oxase_CS"/>
</dbReference>
<dbReference type="InterPro" id="IPR011576">
    <property type="entry name" value="Pyridox_Oxase_N"/>
</dbReference>
<dbReference type="InterPro" id="IPR019576">
    <property type="entry name" value="Pyridoxamine_oxidase_dimer_C"/>
</dbReference>
<dbReference type="InterPro" id="IPR012349">
    <property type="entry name" value="Split_barrel_FMN-bd"/>
</dbReference>
<dbReference type="NCBIfam" id="TIGR00558">
    <property type="entry name" value="pdxH"/>
    <property type="match status" value="1"/>
</dbReference>
<dbReference type="NCBIfam" id="NF004231">
    <property type="entry name" value="PRK05679.1"/>
    <property type="match status" value="1"/>
</dbReference>
<dbReference type="PANTHER" id="PTHR10851:SF0">
    <property type="entry name" value="PYRIDOXINE-5'-PHOSPHATE OXIDASE"/>
    <property type="match status" value="1"/>
</dbReference>
<dbReference type="PANTHER" id="PTHR10851">
    <property type="entry name" value="PYRIDOXINE-5-PHOSPHATE OXIDASE"/>
    <property type="match status" value="1"/>
</dbReference>
<dbReference type="Pfam" id="PF10590">
    <property type="entry name" value="PNP_phzG_C"/>
    <property type="match status" value="1"/>
</dbReference>
<dbReference type="Pfam" id="PF01243">
    <property type="entry name" value="PNPOx_N"/>
    <property type="match status" value="1"/>
</dbReference>
<dbReference type="PIRSF" id="PIRSF000190">
    <property type="entry name" value="Pyd_amn-ph_oxd"/>
    <property type="match status" value="1"/>
</dbReference>
<dbReference type="SUPFAM" id="SSF50475">
    <property type="entry name" value="FMN-binding split barrel"/>
    <property type="match status" value="1"/>
</dbReference>
<dbReference type="PROSITE" id="PS01064">
    <property type="entry name" value="PYRIDOX_OXIDASE"/>
    <property type="match status" value="1"/>
</dbReference>
<protein>
    <recommendedName>
        <fullName evidence="1">Pyridoxine/pyridoxamine 5'-phosphate oxidase</fullName>
        <ecNumber evidence="1">1.4.3.5</ecNumber>
    </recommendedName>
    <alternativeName>
        <fullName evidence="1">PNP/PMP oxidase</fullName>
        <shortName evidence="1">PNPOx</shortName>
    </alternativeName>
    <alternativeName>
        <fullName evidence="1">Pyridoxal 5'-phosphate synthase</fullName>
    </alternativeName>
</protein>
<reference key="1">
    <citation type="submission" date="2006-08" db="EMBL/GenBank/DDBJ databases">
        <title>Complete sequence of chromosome 1 of Shewanella sp. MR-7.</title>
        <authorList>
            <person name="Copeland A."/>
            <person name="Lucas S."/>
            <person name="Lapidus A."/>
            <person name="Barry K."/>
            <person name="Detter J.C."/>
            <person name="Glavina del Rio T."/>
            <person name="Hammon N."/>
            <person name="Israni S."/>
            <person name="Dalin E."/>
            <person name="Tice H."/>
            <person name="Pitluck S."/>
            <person name="Kiss H."/>
            <person name="Brettin T."/>
            <person name="Bruce D."/>
            <person name="Han C."/>
            <person name="Tapia R."/>
            <person name="Gilna P."/>
            <person name="Schmutz J."/>
            <person name="Larimer F."/>
            <person name="Land M."/>
            <person name="Hauser L."/>
            <person name="Kyrpides N."/>
            <person name="Mikhailova N."/>
            <person name="Nealson K."/>
            <person name="Konstantinidis K."/>
            <person name="Klappenbach J."/>
            <person name="Tiedje J."/>
            <person name="Richardson P."/>
        </authorList>
    </citation>
    <scope>NUCLEOTIDE SEQUENCE [LARGE SCALE GENOMIC DNA]</scope>
    <source>
        <strain>MR-7</strain>
    </source>
</reference>
<gene>
    <name evidence="1" type="primary">pdxH</name>
    <name type="ordered locus">Shewmr7_1634</name>
</gene>
<proteinExistence type="inferred from homology"/>
<feature type="chain" id="PRO_0000292331" description="Pyridoxine/pyridoxamine 5'-phosphate oxidase">
    <location>
        <begin position="1"/>
        <end position="212"/>
    </location>
</feature>
<feature type="binding site" evidence="1">
    <location>
        <begin position="8"/>
        <end position="11"/>
    </location>
    <ligand>
        <name>substrate</name>
    </ligand>
</feature>
<feature type="binding site" evidence="1">
    <location>
        <begin position="61"/>
        <end position="66"/>
    </location>
    <ligand>
        <name>FMN</name>
        <dbReference type="ChEBI" id="CHEBI:58210"/>
    </ligand>
</feature>
<feature type="binding site" evidence="1">
    <location>
        <position position="66"/>
    </location>
    <ligand>
        <name>substrate</name>
    </ligand>
</feature>
<feature type="binding site" evidence="1">
    <location>
        <begin position="76"/>
        <end position="77"/>
    </location>
    <ligand>
        <name>FMN</name>
        <dbReference type="ChEBI" id="CHEBI:58210"/>
    </ligand>
</feature>
<feature type="binding site" evidence="1">
    <location>
        <position position="82"/>
    </location>
    <ligand>
        <name>FMN</name>
        <dbReference type="ChEBI" id="CHEBI:58210"/>
    </ligand>
</feature>
<feature type="binding site" evidence="1">
    <location>
        <position position="83"/>
    </location>
    <ligand>
        <name>FMN</name>
        <dbReference type="ChEBI" id="CHEBI:58210"/>
    </ligand>
</feature>
<feature type="binding site" evidence="1">
    <location>
        <position position="105"/>
    </location>
    <ligand>
        <name>FMN</name>
        <dbReference type="ChEBI" id="CHEBI:58210"/>
    </ligand>
</feature>
<feature type="binding site" evidence="1">
    <location>
        <position position="123"/>
    </location>
    <ligand>
        <name>substrate</name>
    </ligand>
</feature>
<feature type="binding site" evidence="1">
    <location>
        <position position="127"/>
    </location>
    <ligand>
        <name>substrate</name>
    </ligand>
</feature>
<feature type="binding site" evidence="1">
    <location>
        <position position="131"/>
    </location>
    <ligand>
        <name>substrate</name>
    </ligand>
</feature>
<feature type="binding site" evidence="1">
    <location>
        <begin position="140"/>
        <end position="141"/>
    </location>
    <ligand>
        <name>FMN</name>
        <dbReference type="ChEBI" id="CHEBI:58210"/>
    </ligand>
</feature>
<feature type="binding site" evidence="1">
    <location>
        <position position="185"/>
    </location>
    <ligand>
        <name>FMN</name>
        <dbReference type="ChEBI" id="CHEBI:58210"/>
    </ligand>
</feature>
<feature type="binding site" evidence="1">
    <location>
        <begin position="191"/>
        <end position="193"/>
    </location>
    <ligand>
        <name>substrate</name>
    </ligand>
</feature>
<feature type="binding site" evidence="1">
    <location>
        <position position="195"/>
    </location>
    <ligand>
        <name>FMN</name>
        <dbReference type="ChEBI" id="CHEBI:58210"/>
    </ligand>
</feature>